<organism>
    <name type="scientific">Arabidopsis thaliana</name>
    <name type="common">Mouse-ear cress</name>
    <dbReference type="NCBI Taxonomy" id="3702"/>
    <lineage>
        <taxon>Eukaryota</taxon>
        <taxon>Viridiplantae</taxon>
        <taxon>Streptophyta</taxon>
        <taxon>Embryophyta</taxon>
        <taxon>Tracheophyta</taxon>
        <taxon>Spermatophyta</taxon>
        <taxon>Magnoliopsida</taxon>
        <taxon>eudicotyledons</taxon>
        <taxon>Gunneridae</taxon>
        <taxon>Pentapetalae</taxon>
        <taxon>rosids</taxon>
        <taxon>malvids</taxon>
        <taxon>Brassicales</taxon>
        <taxon>Brassicaceae</taxon>
        <taxon>Camelineae</taxon>
        <taxon>Arabidopsis</taxon>
    </lineage>
</organism>
<protein>
    <recommendedName>
        <fullName>Vacuolar-sorting receptor 5</fullName>
        <shortName>AtVSR5</shortName>
    </recommendedName>
    <alternativeName>
        <fullName>BP80-like protein e</fullName>
        <shortName>AtBP80e</shortName>
    </alternativeName>
    <alternativeName>
        <fullName>Epidermal growth factor receptor-like protein 5</fullName>
        <shortName>AtELP5</shortName>
    </alternativeName>
</protein>
<sequence>MSPSNKGTVLALILALTMVVVNGFSSRFFVEKSSLTVLNSWEMGAKHDAAIANFGLPKYGGFMIGSVVYAGQDAYGCNSFNKTFNTKSPYPKILLIDRGVCNFALKIWNGQQSGAAAVLLADNIVEPLITMDTPQDEDPDFIDKVKIPSALILRSFGDSLKKALKRGEEVILKMDWSESIPNPDERVEYELWANTNDECGVHCDKQIDFIKNFKGMAQILEKGGYTLFRPHYISWVCPKELLLSKQCRTQCINQGRYCALDTKQEFEDGYNGKDVVYENLRQLCVHKVAKEKNTSWVWWDYVTDFNIRCSMKEKKYSRECAETIVESLGLSLEKIKKCIGDPDADVENEVLKAEEAFQLGQENRGIVTIFPTLMINNAQYRGKLERTAVLKAICSGFKERTEPSICLNSDIETNECLIENGGCWQDKRSNVTACKDTFRGRVCECPVVDGVQYKGDGYTSCKPYGPARCSMNNGDCWSETRKGLTFSSCSDSETSGCRCPLGFLGDGLKCEDIDECKEKSACKCDGCKCKNNWGGYECKCSNNSIYMKEEDTCIERRSGSRSRGLFTIVVLTAIAGISLGAYIFYKYHLQSYMDSEIVSIMSQYIPLDSQSINQDSFK</sequence>
<gene>
    <name type="primary">VSR5</name>
    <name type="synonym">BP80E</name>
    <name type="synonym">ELP5</name>
    <name type="ordered locus">At2g34940</name>
    <name type="ORF">F19I3.17</name>
</gene>
<comment type="function">
    <text evidence="1">Vacuolar-sorting receptor (VSR) involved in clathrin-coated vesicles sorting from Golgi apparatus to vacuoles.</text>
</comment>
<comment type="subcellular location">
    <subcellularLocation>
        <location evidence="1">Membrane</location>
        <topology evidence="1">Single-pass type I membrane protein</topology>
    </subcellularLocation>
    <subcellularLocation>
        <location evidence="1">Golgi apparatus membrane</location>
        <topology evidence="1">Single-pass type I membrane protein</topology>
    </subcellularLocation>
    <subcellularLocation>
        <location evidence="1">Cytoplasmic vesicle</location>
        <location evidence="1">Clathrin-coated vesicle membrane</location>
        <topology evidence="1">Single-pass type I membrane protein</topology>
    </subcellularLocation>
    <subcellularLocation>
        <location evidence="1">Prevacuolar compartment membrane</location>
        <topology evidence="1">Single-pass type I membrane protein</topology>
    </subcellularLocation>
</comment>
<comment type="tissue specificity">
    <text evidence="3">Expressed in seedlings, roots, leaves, flowers and siliques.</text>
</comment>
<comment type="domain">
    <text evidence="1">The tyrosine-based internalization signal may be involved in trafficking at the TGN.</text>
</comment>
<comment type="similarity">
    <text evidence="4">Belongs to the VSR (BP-80) family.</text>
</comment>
<comment type="caution">
    <text evidence="5">Was originally erroneously termed BP80D.</text>
</comment>
<accession>O64758</accession>
<name>VSR5_ARATH</name>
<reference key="1">
    <citation type="journal article" date="1999" name="Nature">
        <title>Sequence and analysis of chromosome 2 of the plant Arabidopsis thaliana.</title>
        <authorList>
            <person name="Lin X."/>
            <person name="Kaul S."/>
            <person name="Rounsley S.D."/>
            <person name="Shea T.P."/>
            <person name="Benito M.-I."/>
            <person name="Town C.D."/>
            <person name="Fujii C.Y."/>
            <person name="Mason T.M."/>
            <person name="Bowman C.L."/>
            <person name="Barnstead M.E."/>
            <person name="Feldblyum T.V."/>
            <person name="Buell C.R."/>
            <person name="Ketchum K.A."/>
            <person name="Lee J.J."/>
            <person name="Ronning C.M."/>
            <person name="Koo H.L."/>
            <person name="Moffat K.S."/>
            <person name="Cronin L.A."/>
            <person name="Shen M."/>
            <person name="Pai G."/>
            <person name="Van Aken S."/>
            <person name="Umayam L."/>
            <person name="Tallon L.J."/>
            <person name="Gill J.E."/>
            <person name="Adams M.D."/>
            <person name="Carrera A.J."/>
            <person name="Creasy T.H."/>
            <person name="Goodman H.M."/>
            <person name="Somerville C.R."/>
            <person name="Copenhaver G.P."/>
            <person name="Preuss D."/>
            <person name="Nierman W.C."/>
            <person name="White O."/>
            <person name="Eisen J.A."/>
            <person name="Salzberg S.L."/>
            <person name="Fraser C.M."/>
            <person name="Venter J.C."/>
        </authorList>
    </citation>
    <scope>NUCLEOTIDE SEQUENCE [LARGE SCALE GENOMIC DNA]</scope>
    <source>
        <strain>cv. Columbia</strain>
    </source>
</reference>
<reference key="2">
    <citation type="journal article" date="2017" name="Plant J.">
        <title>Araport11: a complete reannotation of the Arabidopsis thaliana reference genome.</title>
        <authorList>
            <person name="Cheng C.Y."/>
            <person name="Krishnakumar V."/>
            <person name="Chan A.P."/>
            <person name="Thibaud-Nissen F."/>
            <person name="Schobel S."/>
            <person name="Town C.D."/>
        </authorList>
    </citation>
    <scope>GENOME REANNOTATION</scope>
    <source>
        <strain>cv. Columbia</strain>
    </source>
</reference>
<reference key="3">
    <citation type="journal article" date="2003" name="Science">
        <title>Empirical analysis of transcriptional activity in the Arabidopsis genome.</title>
        <authorList>
            <person name="Yamada K."/>
            <person name="Lim J."/>
            <person name="Dale J.M."/>
            <person name="Chen H."/>
            <person name="Shinn P."/>
            <person name="Palm C.J."/>
            <person name="Southwick A.M."/>
            <person name="Wu H.C."/>
            <person name="Kim C.J."/>
            <person name="Nguyen M."/>
            <person name="Pham P.K."/>
            <person name="Cheuk R.F."/>
            <person name="Karlin-Newmann G."/>
            <person name="Liu S.X."/>
            <person name="Lam B."/>
            <person name="Sakano H."/>
            <person name="Wu T."/>
            <person name="Yu G."/>
            <person name="Miranda M."/>
            <person name="Quach H.L."/>
            <person name="Tripp M."/>
            <person name="Chang C.H."/>
            <person name="Lee J.M."/>
            <person name="Toriumi M.J."/>
            <person name="Chan M.M."/>
            <person name="Tang C.C."/>
            <person name="Onodera C.S."/>
            <person name="Deng J.M."/>
            <person name="Akiyama K."/>
            <person name="Ansari Y."/>
            <person name="Arakawa T."/>
            <person name="Banh J."/>
            <person name="Banno F."/>
            <person name="Bowser L."/>
            <person name="Brooks S.Y."/>
            <person name="Carninci P."/>
            <person name="Chao Q."/>
            <person name="Choy N."/>
            <person name="Enju A."/>
            <person name="Goldsmith A.D."/>
            <person name="Gurjal M."/>
            <person name="Hansen N.F."/>
            <person name="Hayashizaki Y."/>
            <person name="Johnson-Hopson C."/>
            <person name="Hsuan V.W."/>
            <person name="Iida K."/>
            <person name="Karnes M."/>
            <person name="Khan S."/>
            <person name="Koesema E."/>
            <person name="Ishida J."/>
            <person name="Jiang P.X."/>
            <person name="Jones T."/>
            <person name="Kawai J."/>
            <person name="Kamiya A."/>
            <person name="Meyers C."/>
            <person name="Nakajima M."/>
            <person name="Narusaka M."/>
            <person name="Seki M."/>
            <person name="Sakurai T."/>
            <person name="Satou M."/>
            <person name="Tamse R."/>
            <person name="Vaysberg M."/>
            <person name="Wallender E.K."/>
            <person name="Wong C."/>
            <person name="Yamamura Y."/>
            <person name="Yuan S."/>
            <person name="Shinozaki K."/>
            <person name="Davis R.W."/>
            <person name="Theologis A."/>
            <person name="Ecker J.R."/>
        </authorList>
    </citation>
    <scope>NUCLEOTIDE SEQUENCE [LARGE SCALE MRNA]</scope>
    <source>
        <strain>cv. Columbia</strain>
    </source>
</reference>
<reference key="4">
    <citation type="journal article" date="2003" name="J. Exp. Bot.">
        <title>Seed germination is blocked in Arabidopsis putative vacuolar sorting receptor (atbp80) antisense transformants.</title>
        <authorList>
            <person name="Laval V."/>
            <person name="Masclaux F."/>
            <person name="Serin A."/>
            <person name="Carriere M."/>
            <person name="Roldan C."/>
            <person name="Devic M."/>
            <person name="Pont-Lezica R.F."/>
            <person name="Galaud J.-P."/>
        </authorList>
    </citation>
    <scope>TISSUE SPECIFICITY</scope>
</reference>
<reference key="5">
    <citation type="journal article" date="2003" name="Proc. Natl. Acad. Sci. U.S.A.">
        <title>Vacuolar sorting receptor for seed storage proteins in Arabidopsis thaliana.</title>
        <authorList>
            <person name="Shimada T."/>
            <person name="Fuji K."/>
            <person name="Tamura K."/>
            <person name="Kondo M."/>
            <person name="Nishimura M."/>
            <person name="Hara-Nishimura I."/>
        </authorList>
    </citation>
    <scope>GENE FAMILY</scope>
    <scope>NOMENCLATURE</scope>
</reference>
<dbReference type="EMBL" id="AC004238">
    <property type="protein sequence ID" value="AAC12834.1"/>
    <property type="molecule type" value="Genomic_DNA"/>
</dbReference>
<dbReference type="EMBL" id="CP002685">
    <property type="protein sequence ID" value="AEC09042.1"/>
    <property type="molecule type" value="Genomic_DNA"/>
</dbReference>
<dbReference type="EMBL" id="BT004565">
    <property type="protein sequence ID" value="AAO42811.1"/>
    <property type="molecule type" value="mRNA"/>
</dbReference>
<dbReference type="PIR" id="T00476">
    <property type="entry name" value="T00476"/>
</dbReference>
<dbReference type="RefSeq" id="NP_181040.1">
    <property type="nucleotide sequence ID" value="NM_129047.4"/>
</dbReference>
<dbReference type="SMR" id="O64758"/>
<dbReference type="BioGRID" id="3405">
    <property type="interactions" value="2"/>
</dbReference>
<dbReference type="STRING" id="3702.O64758"/>
<dbReference type="GlyCosmos" id="O64758">
    <property type="glycosylation" value="4 sites, No reported glycans"/>
</dbReference>
<dbReference type="GlyGen" id="O64758">
    <property type="glycosylation" value="4 sites"/>
</dbReference>
<dbReference type="iPTMnet" id="O64758"/>
<dbReference type="PaxDb" id="3702-AT2G34940.1"/>
<dbReference type="ProteomicsDB" id="242754"/>
<dbReference type="EnsemblPlants" id="AT2G34940.1">
    <property type="protein sequence ID" value="AT2G34940.1"/>
    <property type="gene ID" value="AT2G34940"/>
</dbReference>
<dbReference type="GeneID" id="818059"/>
<dbReference type="Gramene" id="AT2G34940.1">
    <property type="protein sequence ID" value="AT2G34940.1"/>
    <property type="gene ID" value="AT2G34940"/>
</dbReference>
<dbReference type="KEGG" id="ath:AT2G34940"/>
<dbReference type="Araport" id="AT2G34940"/>
<dbReference type="TAIR" id="AT2G34940">
    <property type="gene designation" value="VSR5"/>
</dbReference>
<dbReference type="eggNOG" id="ENOG502QQUF">
    <property type="taxonomic scope" value="Eukaryota"/>
</dbReference>
<dbReference type="HOGENOM" id="CLU_031082_1_0_1"/>
<dbReference type="InParanoid" id="O64758"/>
<dbReference type="OMA" id="DCKCKNN"/>
<dbReference type="PhylomeDB" id="O64758"/>
<dbReference type="PRO" id="PR:O64758"/>
<dbReference type="Proteomes" id="UP000006548">
    <property type="component" value="Chromosome 2"/>
</dbReference>
<dbReference type="ExpressionAtlas" id="O64758">
    <property type="expression patterns" value="baseline and differential"/>
</dbReference>
<dbReference type="GO" id="GO:0030665">
    <property type="term" value="C:clathrin-coated vesicle membrane"/>
    <property type="evidence" value="ECO:0007669"/>
    <property type="project" value="UniProtKB-SubCell"/>
</dbReference>
<dbReference type="GO" id="GO:0000139">
    <property type="term" value="C:Golgi membrane"/>
    <property type="evidence" value="ECO:0007669"/>
    <property type="project" value="UniProtKB-SubCell"/>
</dbReference>
<dbReference type="GO" id="GO:0005509">
    <property type="term" value="F:calcium ion binding"/>
    <property type="evidence" value="ECO:0007669"/>
    <property type="project" value="InterPro"/>
</dbReference>
<dbReference type="GO" id="GO:0015031">
    <property type="term" value="P:protein transport"/>
    <property type="evidence" value="ECO:0007669"/>
    <property type="project" value="UniProtKB-KW"/>
</dbReference>
<dbReference type="CDD" id="cd00054">
    <property type="entry name" value="EGF_CA"/>
    <property type="match status" value="1"/>
</dbReference>
<dbReference type="FunFam" id="2.10.25.10:FF:000178">
    <property type="entry name" value="vacuolar-sorting receptor 1"/>
    <property type="match status" value="1"/>
</dbReference>
<dbReference type="Gene3D" id="3.50.30.30">
    <property type="match status" value="1"/>
</dbReference>
<dbReference type="Gene3D" id="2.10.25.10">
    <property type="entry name" value="Laminin"/>
    <property type="match status" value="2"/>
</dbReference>
<dbReference type="InterPro" id="IPR001881">
    <property type="entry name" value="EGF-like_Ca-bd_dom"/>
</dbReference>
<dbReference type="InterPro" id="IPR018097">
    <property type="entry name" value="EGF_Ca-bd_CS"/>
</dbReference>
<dbReference type="InterPro" id="IPR046450">
    <property type="entry name" value="PA_dom_sf"/>
</dbReference>
<dbReference type="InterPro" id="IPR003137">
    <property type="entry name" value="PA_domain"/>
</dbReference>
<dbReference type="InterPro" id="IPR056858">
    <property type="entry name" value="VSR_TRX"/>
</dbReference>
<dbReference type="PANTHER" id="PTHR22702">
    <property type="entry name" value="PROTEASE-ASSOCIATED DOMAIN-CONTAINING PROTEIN"/>
    <property type="match status" value="1"/>
</dbReference>
<dbReference type="PANTHER" id="PTHR22702:SF4">
    <property type="entry name" value="VACUOLAR-SORTING RECEPTOR 6-LIKE"/>
    <property type="match status" value="1"/>
</dbReference>
<dbReference type="Pfam" id="PF02225">
    <property type="entry name" value="PA"/>
    <property type="match status" value="1"/>
</dbReference>
<dbReference type="Pfam" id="PF25011">
    <property type="entry name" value="VSR_TRX"/>
    <property type="match status" value="1"/>
</dbReference>
<dbReference type="SMART" id="SM00179">
    <property type="entry name" value="EGF_CA"/>
    <property type="match status" value="1"/>
</dbReference>
<dbReference type="SUPFAM" id="SSF52025">
    <property type="entry name" value="PA domain"/>
    <property type="match status" value="1"/>
</dbReference>
<dbReference type="PROSITE" id="PS00010">
    <property type="entry name" value="ASX_HYDROXYL"/>
    <property type="match status" value="1"/>
</dbReference>
<dbReference type="PROSITE" id="PS00022">
    <property type="entry name" value="EGF_1"/>
    <property type="match status" value="1"/>
</dbReference>
<dbReference type="PROSITE" id="PS01186">
    <property type="entry name" value="EGF_2"/>
    <property type="match status" value="1"/>
</dbReference>
<dbReference type="PROSITE" id="PS01187">
    <property type="entry name" value="EGF_CA"/>
    <property type="match status" value="1"/>
</dbReference>
<proteinExistence type="evidence at transcript level"/>
<evidence type="ECO:0000250" key="1"/>
<evidence type="ECO:0000255" key="2"/>
<evidence type="ECO:0000269" key="3">
    <source>
    </source>
</evidence>
<evidence type="ECO:0000305" key="4"/>
<evidence type="ECO:0000305" key="5">
    <source>
    </source>
</evidence>
<feature type="signal peptide" evidence="2">
    <location>
        <begin position="1"/>
        <end position="23"/>
    </location>
</feature>
<feature type="chain" id="PRO_0000036467" description="Vacuolar-sorting receptor 5">
    <location>
        <begin position="24"/>
        <end position="618"/>
    </location>
</feature>
<feature type="topological domain" description="Lumenal" evidence="2">
    <location>
        <begin position="24"/>
        <end position="563"/>
    </location>
</feature>
<feature type="transmembrane region" description="Helical" evidence="2">
    <location>
        <begin position="564"/>
        <end position="584"/>
    </location>
</feature>
<feature type="topological domain" description="Cytoplasmic" evidence="2">
    <location>
        <begin position="585"/>
        <end position="618"/>
    </location>
</feature>
<feature type="domain" description="PA">
    <location>
        <begin position="58"/>
        <end position="164"/>
    </location>
</feature>
<feature type="domain" description="EGF-like 1">
    <location>
        <begin position="412"/>
        <end position="462"/>
    </location>
</feature>
<feature type="domain" description="EGF-like 2">
    <location>
        <begin position="465"/>
        <end position="511"/>
    </location>
</feature>
<feature type="domain" description="EGF-like 3; calcium-binding" evidence="2">
    <location>
        <begin position="512"/>
        <end position="554"/>
    </location>
</feature>
<feature type="short sequence motif" description="Tyrosine-based internalization motif" evidence="1">
    <location>
        <begin position="604"/>
        <end position="607"/>
    </location>
</feature>
<feature type="glycosylation site" description="N-linked (GlcNAc...) asparagine" evidence="2">
    <location>
        <position position="81"/>
    </location>
</feature>
<feature type="glycosylation site" description="N-linked (GlcNAc...) asparagine" evidence="2">
    <location>
        <position position="293"/>
    </location>
</feature>
<feature type="glycosylation site" description="N-linked (GlcNAc...) asparagine" evidence="2">
    <location>
        <position position="430"/>
    </location>
</feature>
<feature type="glycosylation site" description="N-linked (GlcNAc...) asparagine" evidence="2">
    <location>
        <position position="542"/>
    </location>
</feature>
<feature type="disulfide bond" evidence="1">
    <location>
        <begin position="416"/>
        <end position="434"/>
    </location>
</feature>
<feature type="disulfide bond" evidence="1">
    <location>
        <begin position="423"/>
        <end position="443"/>
    </location>
</feature>
<feature type="disulfide bond" evidence="1">
    <location>
        <begin position="445"/>
        <end position="461"/>
    </location>
</feature>
<feature type="disulfide bond" evidence="1">
    <location>
        <begin position="469"/>
        <end position="489"/>
    </location>
</feature>
<feature type="disulfide bond" evidence="1">
    <location>
        <begin position="476"/>
        <end position="497"/>
    </location>
</feature>
<feature type="disulfide bond" evidence="1">
    <location>
        <begin position="499"/>
        <end position="510"/>
    </location>
</feature>
<feature type="disulfide bond" evidence="1">
    <location>
        <begin position="540"/>
        <end position="553"/>
    </location>
</feature>
<keyword id="KW-0106">Calcium</keyword>
<keyword id="KW-0968">Cytoplasmic vesicle</keyword>
<keyword id="KW-1015">Disulfide bond</keyword>
<keyword id="KW-0245">EGF-like domain</keyword>
<keyword id="KW-0325">Glycoprotein</keyword>
<keyword id="KW-0333">Golgi apparatus</keyword>
<keyword id="KW-0472">Membrane</keyword>
<keyword id="KW-0653">Protein transport</keyword>
<keyword id="KW-1185">Reference proteome</keyword>
<keyword id="KW-0677">Repeat</keyword>
<keyword id="KW-0732">Signal</keyword>
<keyword id="KW-0812">Transmembrane</keyword>
<keyword id="KW-1133">Transmembrane helix</keyword>
<keyword id="KW-0813">Transport</keyword>